<protein>
    <recommendedName>
        <fullName>Uncharacterized protein C40H1.2</fullName>
    </recommendedName>
</protein>
<reference key="1">
    <citation type="journal article" date="1994" name="Nature">
        <title>2.2 Mb of contiguous nucleotide sequence from chromosome III of C. elegans.</title>
        <authorList>
            <person name="Wilson R."/>
            <person name="Ainscough R."/>
            <person name="Anderson K."/>
            <person name="Baynes C."/>
            <person name="Berks M."/>
            <person name="Bonfield J."/>
            <person name="Burton J."/>
            <person name="Connell M."/>
            <person name="Copsey T."/>
            <person name="Cooper J."/>
            <person name="Coulson A."/>
            <person name="Craxton M."/>
            <person name="Dear S."/>
            <person name="Du Z."/>
            <person name="Durbin R."/>
            <person name="Favello A."/>
            <person name="Fraser A."/>
            <person name="Fulton L."/>
            <person name="Gardner A."/>
            <person name="Green P."/>
            <person name="Hawkins T."/>
            <person name="Hillier L."/>
            <person name="Jier M."/>
            <person name="Johnston L."/>
            <person name="Jones M."/>
            <person name="Kershaw J."/>
            <person name="Kirsten J."/>
            <person name="Laisster N."/>
            <person name="Latreille P."/>
            <person name="Lightning J."/>
            <person name="Lloyd C."/>
            <person name="Mortimore B."/>
            <person name="O'Callaghan M."/>
            <person name="Parsons J."/>
            <person name="Percy C."/>
            <person name="Rifken L."/>
            <person name="Roopra A."/>
            <person name="Saunders D."/>
            <person name="Shownkeen R."/>
            <person name="Sims M."/>
            <person name="Smaldon N."/>
            <person name="Smith A."/>
            <person name="Smith M."/>
            <person name="Sonnhammer E."/>
            <person name="Staden R."/>
            <person name="Sulston J."/>
            <person name="Thierry-Mieg J."/>
            <person name="Thomas K."/>
            <person name="Vaudin M."/>
            <person name="Vaughan K."/>
            <person name="Waterston R."/>
            <person name="Watson A."/>
            <person name="Weinstock L."/>
            <person name="Wilkinson-Sproat J."/>
            <person name="Wohldman P."/>
        </authorList>
    </citation>
    <scope>NUCLEOTIDE SEQUENCE [LARGE SCALE GENOMIC DNA]</scope>
    <source>
        <strain>Bristol N2</strain>
    </source>
</reference>
<reference key="2">
    <citation type="journal article" date="1998" name="Science">
        <title>Genome sequence of the nematode C. elegans: a platform for investigating biology.</title>
        <authorList>
            <consortium name="The C. elegans sequencing consortium"/>
        </authorList>
    </citation>
    <scope>NUCLEOTIDE SEQUENCE [LARGE SCALE GENOMIC DNA]</scope>
    <source>
        <strain>Bristol N2</strain>
    </source>
</reference>
<feature type="chain" id="PRO_0000065230" description="Uncharacterized protein C40H1.2">
    <location>
        <begin position="1"/>
        <end position="208"/>
    </location>
</feature>
<dbReference type="EMBL" id="Z19154">
    <property type="protein sequence ID" value="CAA79553.1"/>
    <property type="molecule type" value="Genomic_DNA"/>
</dbReference>
<dbReference type="PIR" id="S28297">
    <property type="entry name" value="S28297"/>
</dbReference>
<dbReference type="RefSeq" id="NP_499050.1">
    <property type="nucleotide sequence ID" value="NM_066649.1"/>
</dbReference>
<dbReference type="BioGRID" id="48194">
    <property type="interactions" value="1"/>
</dbReference>
<dbReference type="DIP" id="DIP-24794N"/>
<dbReference type="STRING" id="6239.C40H1.2.1"/>
<dbReference type="PaxDb" id="6239-C40H1.2"/>
<dbReference type="UCSC" id="C40H1.2">
    <property type="organism name" value="c. elegans"/>
</dbReference>
<dbReference type="WormBase" id="C40H1.2">
    <property type="protein sequence ID" value="CE00110"/>
    <property type="gene ID" value="WBGene00008038"/>
</dbReference>
<dbReference type="eggNOG" id="KOG4569">
    <property type="taxonomic scope" value="Eukaryota"/>
</dbReference>
<dbReference type="HOGENOM" id="CLU_032957_0_0_1"/>
<dbReference type="InParanoid" id="Q03572"/>
<dbReference type="OMA" id="MIICASR"/>
<dbReference type="PhylomeDB" id="Q03572"/>
<dbReference type="PRO" id="PR:Q03572"/>
<dbReference type="Proteomes" id="UP000001940">
    <property type="component" value="Chromosome III"/>
</dbReference>
<dbReference type="Bgee" id="WBGene00008038">
    <property type="expression patterns" value="Expressed in adult organism and 1 other cell type or tissue"/>
</dbReference>
<dbReference type="Gene3D" id="3.40.50.1820">
    <property type="entry name" value="alpha/beta hydrolase"/>
    <property type="match status" value="2"/>
</dbReference>
<dbReference type="InterPro" id="IPR029058">
    <property type="entry name" value="AB_hydrolase_fold"/>
</dbReference>
<dbReference type="PANTHER" id="PTHR45908:SF2">
    <property type="entry name" value="FUNGAL LIPASE-LIKE DOMAIN-CONTAINING PROTEIN"/>
    <property type="match status" value="1"/>
</dbReference>
<dbReference type="PANTHER" id="PTHR45908">
    <property type="entry name" value="PROTEIN CBG11750-RELATED"/>
    <property type="match status" value="1"/>
</dbReference>
<dbReference type="SUPFAM" id="SSF53474">
    <property type="entry name" value="alpha/beta-Hydrolases"/>
    <property type="match status" value="1"/>
</dbReference>
<proteinExistence type="predicted"/>
<name>YLF2_CAEEL</name>
<gene>
    <name type="ORF">C40H1.2</name>
</gene>
<sequence>MIICASRVSHLALQKFRNQIPTMKLHKVRTVNCSADYPDVECNGYTAYDTAQKVIVISFRGTKGPNQNNQIVEGMTRDGLLPYFGNGSGKIFKVLYDSFMLLWNEWYSNKFPSSFHIIHRLDLIPRVPAIDPHTNTTVMFHPRTEVWYNNYMRLNDTYQICEEADGNNCSDAVTEGLNMNDHGFYFDINIANWGKDGCPKNTTGYSQP</sequence>
<organism>
    <name type="scientific">Caenorhabditis elegans</name>
    <dbReference type="NCBI Taxonomy" id="6239"/>
    <lineage>
        <taxon>Eukaryota</taxon>
        <taxon>Metazoa</taxon>
        <taxon>Ecdysozoa</taxon>
        <taxon>Nematoda</taxon>
        <taxon>Chromadorea</taxon>
        <taxon>Rhabditida</taxon>
        <taxon>Rhabditina</taxon>
        <taxon>Rhabditomorpha</taxon>
        <taxon>Rhabditoidea</taxon>
        <taxon>Rhabditidae</taxon>
        <taxon>Peloderinae</taxon>
        <taxon>Caenorhabditis</taxon>
    </lineage>
</organism>
<accession>Q03572</accession>
<keyword id="KW-1185">Reference proteome</keyword>